<dbReference type="EC" id="6.1.1.9" evidence="1"/>
<dbReference type="EMBL" id="AE017196">
    <property type="protein sequence ID" value="AAS14184.1"/>
    <property type="molecule type" value="Genomic_DNA"/>
</dbReference>
<dbReference type="RefSeq" id="WP_010962612.1">
    <property type="nucleotide sequence ID" value="NZ_OX384529.1"/>
</dbReference>
<dbReference type="SMR" id="Q73HS9"/>
<dbReference type="EnsemblBacteria" id="AAS14184">
    <property type="protein sequence ID" value="AAS14184"/>
    <property type="gene ID" value="WD_0464"/>
</dbReference>
<dbReference type="KEGG" id="wol:WD_0464"/>
<dbReference type="eggNOG" id="COG0525">
    <property type="taxonomic scope" value="Bacteria"/>
</dbReference>
<dbReference type="Proteomes" id="UP000008215">
    <property type="component" value="Chromosome"/>
</dbReference>
<dbReference type="GO" id="GO:0005829">
    <property type="term" value="C:cytosol"/>
    <property type="evidence" value="ECO:0007669"/>
    <property type="project" value="TreeGrafter"/>
</dbReference>
<dbReference type="GO" id="GO:0002161">
    <property type="term" value="F:aminoacyl-tRNA deacylase activity"/>
    <property type="evidence" value="ECO:0007669"/>
    <property type="project" value="InterPro"/>
</dbReference>
<dbReference type="GO" id="GO:0005524">
    <property type="term" value="F:ATP binding"/>
    <property type="evidence" value="ECO:0007669"/>
    <property type="project" value="UniProtKB-UniRule"/>
</dbReference>
<dbReference type="GO" id="GO:0004832">
    <property type="term" value="F:valine-tRNA ligase activity"/>
    <property type="evidence" value="ECO:0007669"/>
    <property type="project" value="UniProtKB-UniRule"/>
</dbReference>
<dbReference type="GO" id="GO:0006438">
    <property type="term" value="P:valyl-tRNA aminoacylation"/>
    <property type="evidence" value="ECO:0007669"/>
    <property type="project" value="UniProtKB-UniRule"/>
</dbReference>
<dbReference type="CDD" id="cd07962">
    <property type="entry name" value="Anticodon_Ia_Val"/>
    <property type="match status" value="1"/>
</dbReference>
<dbReference type="FunFam" id="3.40.50.620:FF:000192">
    <property type="entry name" value="Valine--tRNA ligase"/>
    <property type="match status" value="1"/>
</dbReference>
<dbReference type="Gene3D" id="3.40.50.620">
    <property type="entry name" value="HUPs"/>
    <property type="match status" value="2"/>
</dbReference>
<dbReference type="Gene3D" id="1.10.730.10">
    <property type="entry name" value="Isoleucyl-tRNA Synthetase, Domain 1"/>
    <property type="match status" value="1"/>
</dbReference>
<dbReference type="HAMAP" id="MF_02005">
    <property type="entry name" value="Val_tRNA_synth_type2"/>
    <property type="match status" value="1"/>
</dbReference>
<dbReference type="InterPro" id="IPR001412">
    <property type="entry name" value="aa-tRNA-synth_I_CS"/>
</dbReference>
<dbReference type="InterPro" id="IPR002300">
    <property type="entry name" value="aa-tRNA-synth_Ia"/>
</dbReference>
<dbReference type="InterPro" id="IPR033705">
    <property type="entry name" value="Anticodon_Ia_Val"/>
</dbReference>
<dbReference type="InterPro" id="IPR013155">
    <property type="entry name" value="M/V/L/I-tRNA-synth_anticd-bd"/>
</dbReference>
<dbReference type="InterPro" id="IPR014729">
    <property type="entry name" value="Rossmann-like_a/b/a_fold"/>
</dbReference>
<dbReference type="InterPro" id="IPR009080">
    <property type="entry name" value="tRNAsynth_Ia_anticodon-bd"/>
</dbReference>
<dbReference type="InterPro" id="IPR009008">
    <property type="entry name" value="Val/Leu/Ile-tRNA-synth_edit"/>
</dbReference>
<dbReference type="InterPro" id="IPR022874">
    <property type="entry name" value="Valine-tRNA_ligase_type_2"/>
</dbReference>
<dbReference type="InterPro" id="IPR002303">
    <property type="entry name" value="Valyl-tRNA_ligase"/>
</dbReference>
<dbReference type="InterPro" id="IPR014070">
    <property type="entry name" value="WPE_wolbac"/>
</dbReference>
<dbReference type="NCBIfam" id="NF009687">
    <property type="entry name" value="PRK13208.1"/>
    <property type="match status" value="1"/>
</dbReference>
<dbReference type="NCBIfam" id="TIGR00422">
    <property type="entry name" value="valS"/>
    <property type="match status" value="1"/>
</dbReference>
<dbReference type="NCBIfam" id="TIGR02697">
    <property type="entry name" value="WPE_wolbac"/>
    <property type="match status" value="1"/>
</dbReference>
<dbReference type="PANTHER" id="PTHR11946:SF93">
    <property type="entry name" value="VALINE--TRNA LIGASE, CHLOROPLASTIC_MITOCHONDRIAL 2"/>
    <property type="match status" value="1"/>
</dbReference>
<dbReference type="PANTHER" id="PTHR11946">
    <property type="entry name" value="VALYL-TRNA SYNTHETASES"/>
    <property type="match status" value="1"/>
</dbReference>
<dbReference type="Pfam" id="PF08264">
    <property type="entry name" value="Anticodon_1"/>
    <property type="match status" value="1"/>
</dbReference>
<dbReference type="Pfam" id="PF00133">
    <property type="entry name" value="tRNA-synt_1"/>
    <property type="match status" value="1"/>
</dbReference>
<dbReference type="PRINTS" id="PR00986">
    <property type="entry name" value="TRNASYNTHVAL"/>
</dbReference>
<dbReference type="SUPFAM" id="SSF47323">
    <property type="entry name" value="Anticodon-binding domain of a subclass of class I aminoacyl-tRNA synthetases"/>
    <property type="match status" value="1"/>
</dbReference>
<dbReference type="SUPFAM" id="SSF52374">
    <property type="entry name" value="Nucleotidylyl transferase"/>
    <property type="match status" value="1"/>
</dbReference>
<dbReference type="SUPFAM" id="SSF50677">
    <property type="entry name" value="ValRS/IleRS/LeuRS editing domain"/>
    <property type="match status" value="1"/>
</dbReference>
<dbReference type="PROSITE" id="PS00178">
    <property type="entry name" value="AA_TRNA_LIGASE_I"/>
    <property type="match status" value="1"/>
</dbReference>
<name>SYV_WOLPM</name>
<organism>
    <name type="scientific">Wolbachia pipientis wMel</name>
    <dbReference type="NCBI Taxonomy" id="163164"/>
    <lineage>
        <taxon>Bacteria</taxon>
        <taxon>Pseudomonadati</taxon>
        <taxon>Pseudomonadota</taxon>
        <taxon>Alphaproteobacteria</taxon>
        <taxon>Rickettsiales</taxon>
        <taxon>Anaplasmataceae</taxon>
        <taxon>Wolbachieae</taxon>
        <taxon>Wolbachia</taxon>
    </lineage>
</organism>
<protein>
    <recommendedName>
        <fullName evidence="1">Valine--tRNA ligase</fullName>
        <ecNumber evidence="1">6.1.1.9</ecNumber>
    </recommendedName>
    <alternativeName>
        <fullName evidence="1">Valyl-tRNA synthetase</fullName>
        <shortName evidence="1">ValRS</shortName>
    </alternativeName>
</protein>
<keyword id="KW-0030">Aminoacyl-tRNA synthetase</keyword>
<keyword id="KW-0067">ATP-binding</keyword>
<keyword id="KW-0963">Cytoplasm</keyword>
<keyword id="KW-0436">Ligase</keyword>
<keyword id="KW-0547">Nucleotide-binding</keyword>
<keyword id="KW-0648">Protein biosynthesis</keyword>
<accession>Q73HS9</accession>
<sequence>MLKEKYGFKEVEDKCNILWEGSKVYRWNGEKDNTFTIDTPPPTISGKLHIGHIFSYCHTDFIARFQRMLGKDVFYPIGFDDNGLPTERLVEQTYKTRAKEVGREKLIEMCHEVIEKSKQEFKELFKSVGISYDWDLEYHTISKETVTLSQMSFIDLYNKGYAYRKMQPILWDPVDKTAIAQAEIEDKVFESSLNTIVFSTEENEQINIATTRPELLPACVAVFCHPEDARYTHLIGKTTVVPITETKVPIIADDKVKIDKGTGLVMCCTFGDELDIYWQQKHNLPMKIIIDQDGRMSLHSVHGQKEEIWIPVSGHWDDTIGATGMTGERATQMTKEGGCDQKEEWIPVSATRMTDDILNEINGLKVTAARKRIIEILTEKGLLVESTNISHSVKCAERSGAPLEILPTYQWFIKTLEQKAQILDKVKECNWHPSNMRKRMEVWIEGLNWDWCISRQRYFGVPFPAWYSKRKGEEGKIILAEIKALPIDPSKDLPKGYSKEEIIPDQDVMDTWATSSITPQLSALAVNSEFSLPNHRYDTIFPADLRSQSHEIIRTWAFYTILKAHYHANSLPWKNIMISGWCLADDKKKMSKSKGNIITPHIILETYGADVVRYWAANSRLGVDTVYSENTFKIGKRLVTKLWNASKFVSMFMEKHQVMSINSAHETMDKWILSKLYKVIERATNNLLQFEYCEALGAIEEFFWKDFCDSYLELVKKRAYGSSEATLSAKQSLAYVLNVILRLFAPFLPYITEEIYHQLYSYNSVHNQSNWPSKEELIYDKYSEEMGDNVIQILNIIRKIKADNNVSVKHLIKKLMIKADLRKDKLDQSAQNDLQAVCNAETIEWMQSELETEDEKYIVNIDLY</sequence>
<evidence type="ECO:0000255" key="1">
    <source>
        <dbReference type="HAMAP-Rule" id="MF_02005"/>
    </source>
</evidence>
<proteinExistence type="inferred from homology"/>
<feature type="chain" id="PRO_0000224619" description="Valine--tRNA ligase">
    <location>
        <begin position="1"/>
        <end position="864"/>
    </location>
</feature>
<feature type="short sequence motif" description="'HIGH' region">
    <location>
        <begin position="42"/>
        <end position="52"/>
    </location>
</feature>
<feature type="short sequence motif" description="'KMSKS' region">
    <location>
        <begin position="589"/>
        <end position="593"/>
    </location>
</feature>
<feature type="binding site" evidence="1">
    <location>
        <position position="592"/>
    </location>
    <ligand>
        <name>ATP</name>
        <dbReference type="ChEBI" id="CHEBI:30616"/>
    </ligand>
</feature>
<gene>
    <name evidence="1" type="primary">valS</name>
    <name type="ordered locus">WD_0464</name>
</gene>
<reference key="1">
    <citation type="journal article" date="2004" name="PLoS Biol.">
        <title>Phylogenomics of the reproductive parasite Wolbachia pipientis wMel: a streamlined genome overrun by mobile genetic elements.</title>
        <authorList>
            <person name="Wu M."/>
            <person name="Sun L.V."/>
            <person name="Vamathevan J.J."/>
            <person name="Riegler M."/>
            <person name="DeBoy R.T."/>
            <person name="Brownlie J.C."/>
            <person name="McGraw E.A."/>
            <person name="Martin W."/>
            <person name="Esser C."/>
            <person name="Ahmadinejad N."/>
            <person name="Wiegand C."/>
            <person name="Madupu R."/>
            <person name="Beanan M.J."/>
            <person name="Brinkac L.M."/>
            <person name="Daugherty S.C."/>
            <person name="Durkin A.S."/>
            <person name="Kolonay J.F."/>
            <person name="Nelson W.C."/>
            <person name="Mohamoud Y."/>
            <person name="Lee P."/>
            <person name="Berry K.J."/>
            <person name="Young M.B."/>
            <person name="Utterback T.R."/>
            <person name="Weidman J.F."/>
            <person name="Nierman W.C."/>
            <person name="Paulsen I.T."/>
            <person name="Nelson K.E."/>
            <person name="Tettelin H."/>
            <person name="O'Neill S.L."/>
            <person name="Eisen J.A."/>
        </authorList>
    </citation>
    <scope>NUCLEOTIDE SEQUENCE [LARGE SCALE GENOMIC DNA]</scope>
</reference>
<comment type="function">
    <text evidence="1">Catalyzes the attachment of valine to tRNA(Val). As ValRS can inadvertently accommodate and process structurally similar amino acids such as threonine, to avoid such errors, it has a 'posttransfer' editing activity that hydrolyzes mischarged Thr-tRNA(Val) in a tRNA-dependent manner.</text>
</comment>
<comment type="catalytic activity">
    <reaction evidence="1">
        <text>tRNA(Val) + L-valine + ATP = L-valyl-tRNA(Val) + AMP + diphosphate</text>
        <dbReference type="Rhea" id="RHEA:10704"/>
        <dbReference type="Rhea" id="RHEA-COMP:9672"/>
        <dbReference type="Rhea" id="RHEA-COMP:9708"/>
        <dbReference type="ChEBI" id="CHEBI:30616"/>
        <dbReference type="ChEBI" id="CHEBI:33019"/>
        <dbReference type="ChEBI" id="CHEBI:57762"/>
        <dbReference type="ChEBI" id="CHEBI:78442"/>
        <dbReference type="ChEBI" id="CHEBI:78537"/>
        <dbReference type="ChEBI" id="CHEBI:456215"/>
        <dbReference type="EC" id="6.1.1.9"/>
    </reaction>
</comment>
<comment type="subunit">
    <text evidence="1">Monomer.</text>
</comment>
<comment type="subcellular location">
    <subcellularLocation>
        <location evidence="1">Cytoplasm</location>
    </subcellularLocation>
</comment>
<comment type="domain">
    <text evidence="1">ValRS has two distinct active sites: one for aminoacylation and one for editing. The misactivated threonine is translocated from the active site to the editing site.</text>
</comment>
<comment type="similarity">
    <text evidence="1">Belongs to the class-I aminoacyl-tRNA synthetase family. ValS type 2 subfamily.</text>
</comment>